<comment type="function">
    <text evidence="1">Responsible for the release of ribosomes from messenger RNA at the termination of protein biosynthesis. May increase the efficiency of translation by recycling ribosomes from one round of translation to another.</text>
</comment>
<comment type="subcellular location">
    <subcellularLocation>
        <location evidence="1">Cytoplasm</location>
    </subcellularLocation>
</comment>
<comment type="similarity">
    <text evidence="1">Belongs to the RRF family.</text>
</comment>
<accession>P74456</accession>
<organism>
    <name type="scientific">Synechocystis sp. (strain ATCC 27184 / PCC 6803 / Kazusa)</name>
    <dbReference type="NCBI Taxonomy" id="1111708"/>
    <lineage>
        <taxon>Bacteria</taxon>
        <taxon>Bacillati</taxon>
        <taxon>Cyanobacteriota</taxon>
        <taxon>Cyanophyceae</taxon>
        <taxon>Synechococcales</taxon>
        <taxon>Merismopediaceae</taxon>
        <taxon>Synechocystis</taxon>
    </lineage>
</organism>
<gene>
    <name evidence="1" type="primary">frr</name>
    <name type="ordered locus">sll0145</name>
</gene>
<reference key="1">
    <citation type="journal article" date="1996" name="DNA Res.">
        <title>Sequence analysis of the genome of the unicellular cyanobacterium Synechocystis sp. strain PCC6803. II. Sequence determination of the entire genome and assignment of potential protein-coding regions.</title>
        <authorList>
            <person name="Kaneko T."/>
            <person name="Sato S."/>
            <person name="Kotani H."/>
            <person name="Tanaka A."/>
            <person name="Asamizu E."/>
            <person name="Nakamura Y."/>
            <person name="Miyajima N."/>
            <person name="Hirosawa M."/>
            <person name="Sugiura M."/>
            <person name="Sasamoto S."/>
            <person name="Kimura T."/>
            <person name="Hosouchi T."/>
            <person name="Matsuno A."/>
            <person name="Muraki A."/>
            <person name="Nakazaki N."/>
            <person name="Naruo K."/>
            <person name="Okumura S."/>
            <person name="Shimpo S."/>
            <person name="Takeuchi C."/>
            <person name="Wada T."/>
            <person name="Watanabe A."/>
            <person name="Yamada M."/>
            <person name="Yasuda M."/>
            <person name="Tabata S."/>
        </authorList>
    </citation>
    <scope>NUCLEOTIDE SEQUENCE [LARGE SCALE GENOMIC DNA]</scope>
    <source>
        <strain>ATCC 27184 / PCC 6803 / Kazusa</strain>
    </source>
</reference>
<reference key="2">
    <citation type="journal article" date="1997" name="Electrophoresis">
        <title>Towards a proteome project of cyanobacterium Synechocystis sp. strain PCC6803: linking 130 protein spots with their respective genes.</title>
        <authorList>
            <person name="Sazuka T."/>
            <person name="Ohara O."/>
        </authorList>
    </citation>
    <scope>PROTEIN SEQUENCE OF 1-18</scope>
</reference>
<feature type="chain" id="PRO_0000167564" description="Ribosome-recycling factor">
    <location>
        <begin position="1"/>
        <end position="182"/>
    </location>
</feature>
<evidence type="ECO:0000255" key="1">
    <source>
        <dbReference type="HAMAP-Rule" id="MF_00040"/>
    </source>
</evidence>
<sequence length="182" mass="20186">MKLAELKDHMQKSVEATQRSFNTIRTGRANASLLDRITVEYYGAETPLKSLATIGTPDASTIVIQPFDMGSIGTIEKAISLSDLGLTPNNDGKVIRLNIPPLTAERRKELVKVAGKLAEEGKVAIRNIRRDAVDEVRKQEKNSDISEDEARDLQEEIQKLTDQSTKRIDELLAAKEKDITTV</sequence>
<proteinExistence type="evidence at protein level"/>
<dbReference type="EMBL" id="BA000022">
    <property type="protein sequence ID" value="BAA18557.1"/>
    <property type="molecule type" value="Genomic_DNA"/>
</dbReference>
<dbReference type="PIR" id="S76428">
    <property type="entry name" value="S76428"/>
</dbReference>
<dbReference type="SMR" id="P74456"/>
<dbReference type="FunCoup" id="P74456">
    <property type="interactions" value="518"/>
</dbReference>
<dbReference type="STRING" id="1148.gene:10499439"/>
<dbReference type="PaxDb" id="1148-1653645"/>
<dbReference type="EnsemblBacteria" id="BAA18557">
    <property type="protein sequence ID" value="BAA18557"/>
    <property type="gene ID" value="BAA18557"/>
</dbReference>
<dbReference type="KEGG" id="syn:sll0145"/>
<dbReference type="eggNOG" id="COG0233">
    <property type="taxonomic scope" value="Bacteria"/>
</dbReference>
<dbReference type="InParanoid" id="P74456"/>
<dbReference type="PhylomeDB" id="P74456"/>
<dbReference type="Proteomes" id="UP000001425">
    <property type="component" value="Chromosome"/>
</dbReference>
<dbReference type="GO" id="GO:0005737">
    <property type="term" value="C:cytoplasm"/>
    <property type="evidence" value="ECO:0007669"/>
    <property type="project" value="UniProtKB-SubCell"/>
</dbReference>
<dbReference type="GO" id="GO:0043023">
    <property type="term" value="F:ribosomal large subunit binding"/>
    <property type="evidence" value="ECO:0000318"/>
    <property type="project" value="GO_Central"/>
</dbReference>
<dbReference type="GO" id="GO:0006412">
    <property type="term" value="P:translation"/>
    <property type="evidence" value="ECO:0000318"/>
    <property type="project" value="GO_Central"/>
</dbReference>
<dbReference type="GO" id="GO:0006415">
    <property type="term" value="P:translational termination"/>
    <property type="evidence" value="ECO:0007669"/>
    <property type="project" value="UniProtKB-UniRule"/>
</dbReference>
<dbReference type="CDD" id="cd00520">
    <property type="entry name" value="RRF"/>
    <property type="match status" value="1"/>
</dbReference>
<dbReference type="FunFam" id="1.10.132.20:FF:000001">
    <property type="entry name" value="Ribosome-recycling factor"/>
    <property type="match status" value="1"/>
</dbReference>
<dbReference type="FunFam" id="3.30.1360.40:FF:000001">
    <property type="entry name" value="Ribosome-recycling factor"/>
    <property type="match status" value="1"/>
</dbReference>
<dbReference type="Gene3D" id="3.30.1360.40">
    <property type="match status" value="1"/>
</dbReference>
<dbReference type="Gene3D" id="1.10.132.20">
    <property type="entry name" value="Ribosome-recycling factor"/>
    <property type="match status" value="1"/>
</dbReference>
<dbReference type="HAMAP" id="MF_00040">
    <property type="entry name" value="RRF"/>
    <property type="match status" value="1"/>
</dbReference>
<dbReference type="InterPro" id="IPR002661">
    <property type="entry name" value="Ribosome_recyc_fac"/>
</dbReference>
<dbReference type="InterPro" id="IPR023584">
    <property type="entry name" value="Ribosome_recyc_fac_dom"/>
</dbReference>
<dbReference type="InterPro" id="IPR036191">
    <property type="entry name" value="RRF_sf"/>
</dbReference>
<dbReference type="NCBIfam" id="TIGR00496">
    <property type="entry name" value="frr"/>
    <property type="match status" value="1"/>
</dbReference>
<dbReference type="PANTHER" id="PTHR20982:SF3">
    <property type="entry name" value="MITOCHONDRIAL RIBOSOME RECYCLING FACTOR PSEUDO 1"/>
    <property type="match status" value="1"/>
</dbReference>
<dbReference type="PANTHER" id="PTHR20982">
    <property type="entry name" value="RIBOSOME RECYCLING FACTOR"/>
    <property type="match status" value="1"/>
</dbReference>
<dbReference type="Pfam" id="PF01765">
    <property type="entry name" value="RRF"/>
    <property type="match status" value="1"/>
</dbReference>
<dbReference type="SUPFAM" id="SSF55194">
    <property type="entry name" value="Ribosome recycling factor, RRF"/>
    <property type="match status" value="1"/>
</dbReference>
<protein>
    <recommendedName>
        <fullName evidence="1">Ribosome-recycling factor</fullName>
        <shortName evidence="1">RRF</shortName>
    </recommendedName>
    <alternativeName>
        <fullName evidence="1">Ribosome-releasing factor</fullName>
    </alternativeName>
</protein>
<name>RRF_SYNY3</name>
<keyword id="KW-0963">Cytoplasm</keyword>
<keyword id="KW-0903">Direct protein sequencing</keyword>
<keyword id="KW-0648">Protein biosynthesis</keyword>
<keyword id="KW-1185">Reference proteome</keyword>